<name>SYM_CHLT3</name>
<organism>
    <name type="scientific">Chloroherpeton thalassium (strain ATCC 35110 / GB-78)</name>
    <dbReference type="NCBI Taxonomy" id="517418"/>
    <lineage>
        <taxon>Bacteria</taxon>
        <taxon>Pseudomonadati</taxon>
        <taxon>Chlorobiota</taxon>
        <taxon>Chlorobiia</taxon>
        <taxon>Chlorobiales</taxon>
        <taxon>Chloroherpetonaceae</taxon>
        <taxon>Chloroherpeton</taxon>
    </lineage>
</organism>
<keyword id="KW-0030">Aminoacyl-tRNA synthetase</keyword>
<keyword id="KW-0067">ATP-binding</keyword>
<keyword id="KW-0963">Cytoplasm</keyword>
<keyword id="KW-0436">Ligase</keyword>
<keyword id="KW-0479">Metal-binding</keyword>
<keyword id="KW-0547">Nucleotide-binding</keyword>
<keyword id="KW-0648">Protein biosynthesis</keyword>
<keyword id="KW-1185">Reference proteome</keyword>
<keyword id="KW-0694">RNA-binding</keyword>
<keyword id="KW-0820">tRNA-binding</keyword>
<keyword id="KW-0862">Zinc</keyword>
<accession>B3QT85</accession>
<gene>
    <name evidence="1" type="primary">metG</name>
    <name type="ordered locus">Ctha_1727</name>
</gene>
<dbReference type="EC" id="6.1.1.10" evidence="1"/>
<dbReference type="EMBL" id="CP001100">
    <property type="protein sequence ID" value="ACF14184.1"/>
    <property type="molecule type" value="Genomic_DNA"/>
</dbReference>
<dbReference type="RefSeq" id="WP_012500268.1">
    <property type="nucleotide sequence ID" value="NC_011026.1"/>
</dbReference>
<dbReference type="SMR" id="B3QT85"/>
<dbReference type="STRING" id="517418.Ctha_1727"/>
<dbReference type="KEGG" id="cts:Ctha_1727"/>
<dbReference type="eggNOG" id="COG0073">
    <property type="taxonomic scope" value="Bacteria"/>
</dbReference>
<dbReference type="eggNOG" id="COG0143">
    <property type="taxonomic scope" value="Bacteria"/>
</dbReference>
<dbReference type="HOGENOM" id="CLU_009710_1_2_10"/>
<dbReference type="OrthoDB" id="9810191at2"/>
<dbReference type="Proteomes" id="UP000001208">
    <property type="component" value="Chromosome"/>
</dbReference>
<dbReference type="GO" id="GO:0005829">
    <property type="term" value="C:cytosol"/>
    <property type="evidence" value="ECO:0007669"/>
    <property type="project" value="TreeGrafter"/>
</dbReference>
<dbReference type="GO" id="GO:0005524">
    <property type="term" value="F:ATP binding"/>
    <property type="evidence" value="ECO:0007669"/>
    <property type="project" value="UniProtKB-UniRule"/>
</dbReference>
<dbReference type="GO" id="GO:0046872">
    <property type="term" value="F:metal ion binding"/>
    <property type="evidence" value="ECO:0007669"/>
    <property type="project" value="UniProtKB-KW"/>
</dbReference>
<dbReference type="GO" id="GO:0004825">
    <property type="term" value="F:methionine-tRNA ligase activity"/>
    <property type="evidence" value="ECO:0007669"/>
    <property type="project" value="UniProtKB-UniRule"/>
</dbReference>
<dbReference type="GO" id="GO:0000049">
    <property type="term" value="F:tRNA binding"/>
    <property type="evidence" value="ECO:0007669"/>
    <property type="project" value="UniProtKB-KW"/>
</dbReference>
<dbReference type="GO" id="GO:0006431">
    <property type="term" value="P:methionyl-tRNA aminoacylation"/>
    <property type="evidence" value="ECO:0007669"/>
    <property type="project" value="UniProtKB-UniRule"/>
</dbReference>
<dbReference type="CDD" id="cd07957">
    <property type="entry name" value="Anticodon_Ia_Met"/>
    <property type="match status" value="1"/>
</dbReference>
<dbReference type="CDD" id="cd00814">
    <property type="entry name" value="MetRS_core"/>
    <property type="match status" value="1"/>
</dbReference>
<dbReference type="CDD" id="cd02800">
    <property type="entry name" value="tRNA_bind_EcMetRS_like"/>
    <property type="match status" value="1"/>
</dbReference>
<dbReference type="FunFam" id="2.20.28.20:FF:000001">
    <property type="entry name" value="Methionine--tRNA ligase"/>
    <property type="match status" value="1"/>
</dbReference>
<dbReference type="FunFam" id="2.40.50.140:FF:000042">
    <property type="entry name" value="Methionine--tRNA ligase"/>
    <property type="match status" value="1"/>
</dbReference>
<dbReference type="Gene3D" id="3.40.50.620">
    <property type="entry name" value="HUPs"/>
    <property type="match status" value="1"/>
</dbReference>
<dbReference type="Gene3D" id="1.10.730.10">
    <property type="entry name" value="Isoleucyl-tRNA Synthetase, Domain 1"/>
    <property type="match status" value="1"/>
</dbReference>
<dbReference type="Gene3D" id="2.20.28.20">
    <property type="entry name" value="Methionyl-tRNA synthetase, Zn-domain"/>
    <property type="match status" value="1"/>
</dbReference>
<dbReference type="Gene3D" id="2.40.50.140">
    <property type="entry name" value="Nucleic acid-binding proteins"/>
    <property type="match status" value="1"/>
</dbReference>
<dbReference type="HAMAP" id="MF_00098">
    <property type="entry name" value="Met_tRNA_synth_type1"/>
    <property type="match status" value="1"/>
</dbReference>
<dbReference type="InterPro" id="IPR001412">
    <property type="entry name" value="aa-tRNA-synth_I_CS"/>
</dbReference>
<dbReference type="InterPro" id="IPR041872">
    <property type="entry name" value="Anticodon_Met"/>
</dbReference>
<dbReference type="InterPro" id="IPR004495">
    <property type="entry name" value="Met-tRNA-synth_bsu_C"/>
</dbReference>
<dbReference type="InterPro" id="IPR023458">
    <property type="entry name" value="Met-tRNA_ligase_1"/>
</dbReference>
<dbReference type="InterPro" id="IPR014758">
    <property type="entry name" value="Met-tRNA_synth"/>
</dbReference>
<dbReference type="InterPro" id="IPR015413">
    <property type="entry name" value="Methionyl/Leucyl_tRNA_Synth"/>
</dbReference>
<dbReference type="InterPro" id="IPR033911">
    <property type="entry name" value="MetRS_core"/>
</dbReference>
<dbReference type="InterPro" id="IPR029038">
    <property type="entry name" value="MetRS_Zn"/>
</dbReference>
<dbReference type="InterPro" id="IPR012340">
    <property type="entry name" value="NA-bd_OB-fold"/>
</dbReference>
<dbReference type="InterPro" id="IPR014729">
    <property type="entry name" value="Rossmann-like_a/b/a_fold"/>
</dbReference>
<dbReference type="InterPro" id="IPR002547">
    <property type="entry name" value="tRNA-bd_dom"/>
</dbReference>
<dbReference type="InterPro" id="IPR009080">
    <property type="entry name" value="tRNAsynth_Ia_anticodon-bd"/>
</dbReference>
<dbReference type="NCBIfam" id="TIGR00398">
    <property type="entry name" value="metG"/>
    <property type="match status" value="1"/>
</dbReference>
<dbReference type="NCBIfam" id="TIGR00399">
    <property type="entry name" value="metG_C_term"/>
    <property type="match status" value="1"/>
</dbReference>
<dbReference type="NCBIfam" id="NF001100">
    <property type="entry name" value="PRK00133.1"/>
    <property type="match status" value="1"/>
</dbReference>
<dbReference type="PANTHER" id="PTHR45765">
    <property type="entry name" value="METHIONINE--TRNA LIGASE"/>
    <property type="match status" value="1"/>
</dbReference>
<dbReference type="PANTHER" id="PTHR45765:SF1">
    <property type="entry name" value="METHIONINE--TRNA LIGASE, CYTOPLASMIC"/>
    <property type="match status" value="1"/>
</dbReference>
<dbReference type="Pfam" id="PF19303">
    <property type="entry name" value="Anticodon_3"/>
    <property type="match status" value="1"/>
</dbReference>
<dbReference type="Pfam" id="PF09334">
    <property type="entry name" value="tRNA-synt_1g"/>
    <property type="match status" value="1"/>
</dbReference>
<dbReference type="Pfam" id="PF01588">
    <property type="entry name" value="tRNA_bind"/>
    <property type="match status" value="1"/>
</dbReference>
<dbReference type="PRINTS" id="PR01041">
    <property type="entry name" value="TRNASYNTHMET"/>
</dbReference>
<dbReference type="SUPFAM" id="SSF47323">
    <property type="entry name" value="Anticodon-binding domain of a subclass of class I aminoacyl-tRNA synthetases"/>
    <property type="match status" value="1"/>
</dbReference>
<dbReference type="SUPFAM" id="SSF57770">
    <property type="entry name" value="Methionyl-tRNA synthetase (MetRS), Zn-domain"/>
    <property type="match status" value="1"/>
</dbReference>
<dbReference type="SUPFAM" id="SSF50249">
    <property type="entry name" value="Nucleic acid-binding proteins"/>
    <property type="match status" value="1"/>
</dbReference>
<dbReference type="SUPFAM" id="SSF52374">
    <property type="entry name" value="Nucleotidylyl transferase"/>
    <property type="match status" value="1"/>
</dbReference>
<dbReference type="PROSITE" id="PS00178">
    <property type="entry name" value="AA_TRNA_LIGASE_I"/>
    <property type="match status" value="1"/>
</dbReference>
<dbReference type="PROSITE" id="PS50886">
    <property type="entry name" value="TRBD"/>
    <property type="match status" value="1"/>
</dbReference>
<protein>
    <recommendedName>
        <fullName evidence="1">Methionine--tRNA ligase</fullName>
        <ecNumber evidence="1">6.1.1.10</ecNumber>
    </recommendedName>
    <alternativeName>
        <fullName evidence="1">Methionyl-tRNA synthetase</fullName>
        <shortName evidence="1">MetRS</shortName>
    </alternativeName>
</protein>
<comment type="function">
    <text evidence="1">Is required not only for elongation of protein synthesis but also for the initiation of all mRNA translation through initiator tRNA(fMet) aminoacylation.</text>
</comment>
<comment type="catalytic activity">
    <reaction evidence="1">
        <text>tRNA(Met) + L-methionine + ATP = L-methionyl-tRNA(Met) + AMP + diphosphate</text>
        <dbReference type="Rhea" id="RHEA:13481"/>
        <dbReference type="Rhea" id="RHEA-COMP:9667"/>
        <dbReference type="Rhea" id="RHEA-COMP:9698"/>
        <dbReference type="ChEBI" id="CHEBI:30616"/>
        <dbReference type="ChEBI" id="CHEBI:33019"/>
        <dbReference type="ChEBI" id="CHEBI:57844"/>
        <dbReference type="ChEBI" id="CHEBI:78442"/>
        <dbReference type="ChEBI" id="CHEBI:78530"/>
        <dbReference type="ChEBI" id="CHEBI:456215"/>
        <dbReference type="EC" id="6.1.1.10"/>
    </reaction>
</comment>
<comment type="cofactor">
    <cofactor evidence="1">
        <name>Zn(2+)</name>
        <dbReference type="ChEBI" id="CHEBI:29105"/>
    </cofactor>
    <text evidence="1">Binds 1 zinc ion per subunit.</text>
</comment>
<comment type="subunit">
    <text evidence="1">Homodimer.</text>
</comment>
<comment type="subcellular location">
    <subcellularLocation>
        <location evidence="1">Cytoplasm</location>
    </subcellularLocation>
</comment>
<comment type="similarity">
    <text evidence="1">Belongs to the class-I aminoacyl-tRNA synthetase family. MetG type 1 subfamily.</text>
</comment>
<proteinExistence type="inferred from homology"/>
<feature type="chain" id="PRO_1000093706" description="Methionine--tRNA ligase">
    <location>
        <begin position="1"/>
        <end position="700"/>
    </location>
</feature>
<feature type="domain" description="tRNA-binding" evidence="1">
    <location>
        <begin position="599"/>
        <end position="700"/>
    </location>
</feature>
<feature type="short sequence motif" description="'HIGH' region">
    <location>
        <begin position="14"/>
        <end position="24"/>
    </location>
</feature>
<feature type="short sequence motif" description="'KMSKS' region">
    <location>
        <begin position="343"/>
        <end position="347"/>
    </location>
</feature>
<feature type="binding site" evidence="1">
    <location>
        <position position="146"/>
    </location>
    <ligand>
        <name>Zn(2+)</name>
        <dbReference type="ChEBI" id="CHEBI:29105"/>
    </ligand>
</feature>
<feature type="binding site" evidence="1">
    <location>
        <position position="149"/>
    </location>
    <ligand>
        <name>Zn(2+)</name>
        <dbReference type="ChEBI" id="CHEBI:29105"/>
    </ligand>
</feature>
<feature type="binding site" evidence="1">
    <location>
        <position position="159"/>
    </location>
    <ligand>
        <name>Zn(2+)</name>
        <dbReference type="ChEBI" id="CHEBI:29105"/>
    </ligand>
</feature>
<feature type="binding site" evidence="1">
    <location>
        <position position="162"/>
    </location>
    <ligand>
        <name>Zn(2+)</name>
        <dbReference type="ChEBI" id="CHEBI:29105"/>
    </ligand>
</feature>
<feature type="binding site" evidence="1">
    <location>
        <position position="346"/>
    </location>
    <ligand>
        <name>ATP</name>
        <dbReference type="ChEBI" id="CHEBI:30616"/>
    </ligand>
</feature>
<sequence>MSQYKRTLVTTALPYANGPVHLGHLAGVYLPADIYVRFKRLKGEDVIHIGGSDEHGVPITLTADKEGVSPQVVVDRYHNRNSEAFAKCGISFDHYGRTSSPVHHETAQEFFLDIEKKGIFTKKVEKQFYDEESRHFLSDRYVTGTCPVCGNPDANGDQCEKCGTYLSANELINPKSKLTGKTPILKETLHWYFPLGRFQKKLEDFIEGHAKTWRQNVINYSRTWLRQGLGDRAITRDLPWGVKVPLEGEEAKDKVLYVWFDAVLGYISSTKEWAAKQGQPDLWKTYWQSPETRLIHFIGKDNVVFHALMFPAILMAKNENADAQYVLVDNVPASEFMNFEGKKFSKSRNYAVYLHEFLEKFPADTLRYSLAINYPESRDTDFSWKDFQNRTNGELADTLGNFVKRAVDFTNSKFQGEVPAECTIEDWNALGEGWHGGFKKYEEALENFHIREACFTAMDFARFANRYLTESEPWKVIKTEPEKAAKIMAMALNLCETLATVFAPILPETSAKIFDMLGVSEAAQAKVGENLFEKVKAPQLAKGHKLSGKSEILFRKIEDADIQPELDKIAAMLAALEQKEAEKATENFEPIKPTITFDEFEKIDLRVAKVLECERVPKTDKLLRLKVQLGTETRQVLAGLAKYYTPEALLGKNVVMVANLAPRKMRGMESQGMVLAVEDAAGCLQALSPEGDSIVGKPVK</sequence>
<reference key="1">
    <citation type="submission" date="2008-06" db="EMBL/GenBank/DDBJ databases">
        <title>Complete sequence of Chloroherpeton thalassium ATCC 35110.</title>
        <authorList>
            <consortium name="US DOE Joint Genome Institute"/>
            <person name="Lucas S."/>
            <person name="Copeland A."/>
            <person name="Lapidus A."/>
            <person name="Glavina del Rio T."/>
            <person name="Dalin E."/>
            <person name="Tice H."/>
            <person name="Bruce D."/>
            <person name="Goodwin L."/>
            <person name="Pitluck S."/>
            <person name="Schmutz J."/>
            <person name="Larimer F."/>
            <person name="Land M."/>
            <person name="Hauser L."/>
            <person name="Kyrpides N."/>
            <person name="Mikhailova N."/>
            <person name="Liu Z."/>
            <person name="Li T."/>
            <person name="Zhao F."/>
            <person name="Overmann J."/>
            <person name="Bryant D.A."/>
            <person name="Richardson P."/>
        </authorList>
    </citation>
    <scope>NUCLEOTIDE SEQUENCE [LARGE SCALE GENOMIC DNA]</scope>
    <source>
        <strain>ATCC 35110 / GB-78</strain>
    </source>
</reference>
<evidence type="ECO:0000255" key="1">
    <source>
        <dbReference type="HAMAP-Rule" id="MF_00098"/>
    </source>
</evidence>